<keyword id="KW-0903">Direct protein sequencing</keyword>
<keyword id="KW-1015">Disulfide bond</keyword>
<keyword id="KW-0646">Protease inhibitor</keyword>
<keyword id="KW-0677">Repeat</keyword>
<keyword id="KW-0964">Secreted</keyword>
<keyword id="KW-0722">Serine protease inhibitor</keyword>
<protein>
    <recommendedName>
        <fullName evidence="5">BPTI/Kunitz domain-containing protein</fullName>
    </recommendedName>
</protein>
<dbReference type="EMBL" id="GT274423">
    <property type="status" value="NOT_ANNOTATED_CDS"/>
    <property type="molecule type" value="mRNA"/>
</dbReference>
<dbReference type="EMBL" id="GT276627">
    <property type="status" value="NOT_ANNOTATED_CDS"/>
    <property type="molecule type" value="mRNA"/>
</dbReference>
<dbReference type="EMBL" id="EZ421228">
    <property type="status" value="NOT_ANNOTATED_CDS"/>
    <property type="molecule type" value="mRNA"/>
</dbReference>
<dbReference type="SMR" id="P86733"/>
<dbReference type="GO" id="GO:0005576">
    <property type="term" value="C:extracellular region"/>
    <property type="evidence" value="ECO:0000314"/>
    <property type="project" value="UniProtKB"/>
</dbReference>
<dbReference type="GO" id="GO:0005615">
    <property type="term" value="C:extracellular space"/>
    <property type="evidence" value="ECO:0007669"/>
    <property type="project" value="TreeGrafter"/>
</dbReference>
<dbReference type="GO" id="GO:0004867">
    <property type="term" value="F:serine-type endopeptidase inhibitor activity"/>
    <property type="evidence" value="ECO:0007669"/>
    <property type="project" value="UniProtKB-KW"/>
</dbReference>
<dbReference type="CDD" id="cd00109">
    <property type="entry name" value="Kunitz-type"/>
    <property type="match status" value="2"/>
</dbReference>
<dbReference type="FunFam" id="4.10.410.10:FF:000004">
    <property type="entry name" value="Tissue factor pathway inhibitor"/>
    <property type="match status" value="1"/>
</dbReference>
<dbReference type="FunFam" id="4.10.410.10:FF:000015">
    <property type="entry name" value="WAP four-disulfide core domain 6A"/>
    <property type="match status" value="1"/>
</dbReference>
<dbReference type="Gene3D" id="4.10.410.10">
    <property type="entry name" value="Pancreatic trypsin inhibitor Kunitz domain"/>
    <property type="match status" value="2"/>
</dbReference>
<dbReference type="InterPro" id="IPR002223">
    <property type="entry name" value="Kunitz_BPTI"/>
</dbReference>
<dbReference type="InterPro" id="IPR036880">
    <property type="entry name" value="Kunitz_BPTI_sf"/>
</dbReference>
<dbReference type="InterPro" id="IPR020901">
    <property type="entry name" value="Prtase_inh_Kunz-CS"/>
</dbReference>
<dbReference type="InterPro" id="IPR050098">
    <property type="entry name" value="TFPI/VKTCI-like"/>
</dbReference>
<dbReference type="PANTHER" id="PTHR10083:SF374">
    <property type="entry name" value="BPTI_KUNITZ INHIBITOR DOMAIN-CONTAINING PROTEIN"/>
    <property type="match status" value="1"/>
</dbReference>
<dbReference type="PANTHER" id="PTHR10083">
    <property type="entry name" value="KUNITZ-TYPE PROTEASE INHIBITOR-RELATED"/>
    <property type="match status" value="1"/>
</dbReference>
<dbReference type="Pfam" id="PF00014">
    <property type="entry name" value="Kunitz_BPTI"/>
    <property type="match status" value="2"/>
</dbReference>
<dbReference type="PRINTS" id="PR00759">
    <property type="entry name" value="BASICPTASE"/>
</dbReference>
<dbReference type="SMART" id="SM00131">
    <property type="entry name" value="KU"/>
    <property type="match status" value="2"/>
</dbReference>
<dbReference type="SUPFAM" id="SSF57362">
    <property type="entry name" value="BPTI-like"/>
    <property type="match status" value="2"/>
</dbReference>
<dbReference type="PROSITE" id="PS00280">
    <property type="entry name" value="BPTI_KUNITZ_1"/>
    <property type="match status" value="2"/>
</dbReference>
<dbReference type="PROSITE" id="PS50279">
    <property type="entry name" value="BPTI_KUNITZ_2"/>
    <property type="match status" value="2"/>
</dbReference>
<accession>P86733</accession>
<comment type="function">
    <text evidence="1">Serine protease inhibitor.</text>
</comment>
<comment type="subcellular location">
    <subcellularLocation>
        <location evidence="4">Secreted</location>
    </subcellularLocation>
</comment>
<comment type="tissue specificity">
    <text evidence="4">Component of the acid-soluble and acid-insoluble organic matrix of calcified shell layers (at protein level).</text>
</comment>
<organism>
    <name type="scientific">Haliotis asinina</name>
    <name type="common">Donkey's ear abalone</name>
    <name type="synonym">Ass's ear abalone</name>
    <dbReference type="NCBI Taxonomy" id="109174"/>
    <lineage>
        <taxon>Eukaryota</taxon>
        <taxon>Metazoa</taxon>
        <taxon>Spiralia</taxon>
        <taxon>Lophotrochozoa</taxon>
        <taxon>Mollusca</taxon>
        <taxon>Gastropoda</taxon>
        <taxon>Vetigastropoda</taxon>
        <taxon>Lepetellida</taxon>
        <taxon>Haliotoidea</taxon>
        <taxon>Haliotidae</taxon>
        <taxon>Haliotis</taxon>
    </lineage>
</organism>
<reference evidence="6" key="1">
    <citation type="journal article" date="2010" name="Mol. Biol. Evol.">
        <title>Parallel evolution of nacre building gene sets in molluscs.</title>
        <authorList>
            <person name="Jackson D.J."/>
            <person name="McDougall C."/>
            <person name="Woodcroft B."/>
            <person name="Moase P."/>
            <person name="Rose R.A."/>
            <person name="Kube M."/>
            <person name="Reinhardt R."/>
            <person name="Rokhsar D.S."/>
            <person name="Montagnani C."/>
            <person name="Joubert C."/>
            <person name="Piquemal D."/>
            <person name="Degnan B.M."/>
        </authorList>
    </citation>
    <scope>NUCLEOTIDE SEQUENCE [MRNA]</scope>
    <scope>IDENTIFICATION</scope>
    <source>
        <tissue evidence="3">Mantle</tissue>
    </source>
</reference>
<reference evidence="6" key="2">
    <citation type="journal article" date="2010" name="Proteome Sci.">
        <title>Proteomic analysis of the organic matrix of the abalone Haliotis asinina calcified shell.</title>
        <authorList>
            <person name="Marie B."/>
            <person name="Marie A."/>
            <person name="Jackson D.J."/>
            <person name="Dubost L."/>
            <person name="Degnan B.M."/>
            <person name="Milet C."/>
            <person name="Marin F."/>
        </authorList>
    </citation>
    <scope>PROTEIN SEQUENCE OF 25-35; 42-61; 75-90 AND 112-117</scope>
    <scope>SUBCELLULAR LOCATION</scope>
    <scope>TISSUE SPECIFICITY</scope>
    <source>
        <tissue evidence="4">Shell</tissue>
    </source>
</reference>
<name>KCP_HALAI</name>
<sequence length="126" mass="14526">LFVGLTSAKYHDVCQLPRDPGPCRAYIPLYYFNSRTCLCEKFVYGGCQGNANRFDTVEDCRRRCGGGDLCSLPRDSGPCEAAIPRWWYNKRTNRCQRFTYGGCEGNANNFKTLDECRFQCRKRSTY</sequence>
<evidence type="ECO:0000250" key="1">
    <source>
        <dbReference type="UniProtKB" id="P84875"/>
    </source>
</evidence>
<evidence type="ECO:0000255" key="2">
    <source>
        <dbReference type="PROSITE-ProRule" id="PRU00031"/>
    </source>
</evidence>
<evidence type="ECO:0000269" key="3">
    <source>
    </source>
</evidence>
<evidence type="ECO:0000269" key="4">
    <source>
    </source>
</evidence>
<evidence type="ECO:0000303" key="5">
    <source>
    </source>
</evidence>
<evidence type="ECO:0000305" key="6"/>
<feature type="chain" id="PRO_0000399444" description="BPTI/Kunitz domain-containing protein">
    <location>
        <begin position="1" status="less than"/>
        <end position="126"/>
    </location>
</feature>
<feature type="domain" description="BPTI/Kunitz inhibitor 1" evidence="2">
    <location>
        <begin position="14"/>
        <end position="64"/>
    </location>
</feature>
<feature type="domain" description="BPTI/Kunitz inhibitor 2" evidence="2">
    <location>
        <begin position="70"/>
        <end position="120"/>
    </location>
</feature>
<feature type="disulfide bond" evidence="2">
    <location>
        <begin position="14"/>
        <end position="64"/>
    </location>
</feature>
<feature type="disulfide bond" evidence="2">
    <location>
        <begin position="23"/>
        <end position="47"/>
    </location>
</feature>
<feature type="disulfide bond" evidence="2">
    <location>
        <begin position="39"/>
        <end position="60"/>
    </location>
</feature>
<feature type="disulfide bond" evidence="2">
    <location>
        <begin position="70"/>
        <end position="120"/>
    </location>
</feature>
<feature type="disulfide bond" evidence="2">
    <location>
        <begin position="79"/>
        <end position="103"/>
    </location>
</feature>
<feature type="disulfide bond" evidence="2">
    <location>
        <begin position="95"/>
        <end position="116"/>
    </location>
</feature>
<feature type="sequence conflict" description="In Ref. 1; GT274423." evidence="6" ref="1">
    <original>K</original>
    <variation>R</variation>
    <location>
        <position position="122"/>
    </location>
</feature>
<feature type="non-terminal residue" evidence="6">
    <location>
        <position position="1"/>
    </location>
</feature>
<proteinExistence type="evidence at protein level"/>